<comment type="developmental stage">
    <text>Highly expressed in young fruit with reduced expression in the later stages of fruit development.</text>
</comment>
<feature type="chain" id="PRO_0000084294" description="Fruit protein pKIWI502">
    <location>
        <begin position="1"/>
        <end position="317"/>
    </location>
</feature>
<feature type="domain" description="FAD-binding FR-type" evidence="1">
    <location>
        <begin position="71"/>
        <end position="182"/>
    </location>
</feature>
<feature type="region of interest" description="Disordered" evidence="2">
    <location>
        <begin position="1"/>
        <end position="29"/>
    </location>
</feature>
<reference key="1">
    <citation type="journal article" date="1994" name="Plant Mol. Biol.">
        <title>Cloning and characterization of five cDNAs for genes differentially expressed during fruit development of kiwifruit (Actinidia deliciosa var. deliciosa).</title>
        <authorList>
            <person name="Ledger S.E."/>
            <person name="Gardner R.C."/>
        </authorList>
    </citation>
    <scope>NUCLEOTIDE SEQUENCE [MRNA]</scope>
    <source>
        <strain>cv. Hayward</strain>
        <tissue>Fruit</tissue>
    </source>
</reference>
<gene>
    <name type="ORF">pKIWI502</name>
</gene>
<proteinExistence type="evidence at transcript level"/>
<protein>
    <recommendedName>
        <fullName>Fruit protein pKIWI502</fullName>
    </recommendedName>
</protein>
<dbReference type="EMBL" id="L27809">
    <property type="protein sequence ID" value="AAA53070.1"/>
    <property type="molecule type" value="mRNA"/>
</dbReference>
<dbReference type="SMR" id="P43394"/>
<dbReference type="GO" id="GO:0016491">
    <property type="term" value="F:oxidoreductase activity"/>
    <property type="evidence" value="ECO:0007669"/>
    <property type="project" value="InterPro"/>
</dbReference>
<dbReference type="Gene3D" id="3.40.50.80">
    <property type="entry name" value="Nucleotide-binding domain of ferredoxin-NADP reductase (FNR) module"/>
    <property type="match status" value="1"/>
</dbReference>
<dbReference type="Gene3D" id="2.40.30.10">
    <property type="entry name" value="Translation factors"/>
    <property type="match status" value="1"/>
</dbReference>
<dbReference type="InterPro" id="IPR017927">
    <property type="entry name" value="FAD-bd_FR_type"/>
</dbReference>
<dbReference type="InterPro" id="IPR039261">
    <property type="entry name" value="FNR_nucleotide-bd"/>
</dbReference>
<dbReference type="InterPro" id="IPR001433">
    <property type="entry name" value="OxRdtase_FAD/NAD-bd"/>
</dbReference>
<dbReference type="InterPro" id="IPR017938">
    <property type="entry name" value="Riboflavin_synthase-like_b-brl"/>
</dbReference>
<dbReference type="PANTHER" id="PTHR47215">
    <property type="match status" value="1"/>
</dbReference>
<dbReference type="PANTHER" id="PTHR47215:SF1">
    <property type="entry name" value="F9L1.8 PROTEIN"/>
    <property type="match status" value="1"/>
</dbReference>
<dbReference type="Pfam" id="PF00175">
    <property type="entry name" value="NAD_binding_1"/>
    <property type="match status" value="1"/>
</dbReference>
<dbReference type="SUPFAM" id="SSF52343">
    <property type="entry name" value="Ferredoxin reductase-like, C-terminal NADP-linked domain"/>
    <property type="match status" value="1"/>
</dbReference>
<dbReference type="SUPFAM" id="SSF63380">
    <property type="entry name" value="Riboflavin synthase domain-like"/>
    <property type="match status" value="1"/>
</dbReference>
<dbReference type="PROSITE" id="PS51384">
    <property type="entry name" value="FAD_FR"/>
    <property type="match status" value="1"/>
</dbReference>
<name>K502_ACTDE</name>
<evidence type="ECO:0000255" key="1">
    <source>
        <dbReference type="PROSITE-ProRule" id="PRU00716"/>
    </source>
</evidence>
<evidence type="ECO:0000256" key="2">
    <source>
        <dbReference type="SAM" id="MobiDB-lite"/>
    </source>
</evidence>
<sequence length="317" mass="35199">MSITLSRPSLSRPSLSRHPSLTLHSSLSHAPPHHRPVAFLRHPTLRYHHHGRLLSVASAILQDTAIRQDTYIWTPVPISRVLPAAAESLFKVIVDLSRSPDLVYNFVSPGQYVQIRIPEAIVNPPPRPAYFYIASPPSLVKKNLEFEFLIRSVPGTTSEVLCSLKEGDVVDLTQIIGRGFDIEQILPPEDYPTVLISVTGYGMSAGRSFIEEGFGANKRSDVRLYYGAENLETMGYQERFKDWEASGVRVIPVLSRPPPNWNGAVGYVQDVYLKDKPIADPRTTGAVLIGNPNMVEETRGILVAQGVSREKILVTQD</sequence>
<organism>
    <name type="scientific">Actinidia deliciosa</name>
    <name type="common">Kiwi</name>
    <dbReference type="NCBI Taxonomy" id="3627"/>
    <lineage>
        <taxon>Eukaryota</taxon>
        <taxon>Viridiplantae</taxon>
        <taxon>Streptophyta</taxon>
        <taxon>Embryophyta</taxon>
        <taxon>Tracheophyta</taxon>
        <taxon>Spermatophyta</taxon>
        <taxon>Magnoliopsida</taxon>
        <taxon>eudicotyledons</taxon>
        <taxon>Gunneridae</taxon>
        <taxon>Pentapetalae</taxon>
        <taxon>asterids</taxon>
        <taxon>Ericales</taxon>
        <taxon>Actinidiaceae</taxon>
        <taxon>Actinidia</taxon>
    </lineage>
</organism>
<accession>P43394</accession>